<dbReference type="EC" id="2.7.7.6" evidence="1"/>
<dbReference type="EMBL" id="AP009368">
    <property type="protein sequence ID" value="BAF49931.1"/>
    <property type="molecule type" value="Genomic_DNA"/>
</dbReference>
<dbReference type="RefSeq" id="YP_001123107.1">
    <property type="nucleotide sequence ID" value="NC_009267.1"/>
</dbReference>
<dbReference type="SMR" id="A4QJS5"/>
<dbReference type="GeneID" id="4962445"/>
<dbReference type="GO" id="GO:0009507">
    <property type="term" value="C:chloroplast"/>
    <property type="evidence" value="ECO:0007669"/>
    <property type="project" value="UniProtKB-SubCell"/>
</dbReference>
<dbReference type="GO" id="GO:0000428">
    <property type="term" value="C:DNA-directed RNA polymerase complex"/>
    <property type="evidence" value="ECO:0007669"/>
    <property type="project" value="UniProtKB-KW"/>
</dbReference>
<dbReference type="GO" id="GO:0005739">
    <property type="term" value="C:mitochondrion"/>
    <property type="evidence" value="ECO:0007669"/>
    <property type="project" value="GOC"/>
</dbReference>
<dbReference type="GO" id="GO:0003677">
    <property type="term" value="F:DNA binding"/>
    <property type="evidence" value="ECO:0007669"/>
    <property type="project" value="UniProtKB-UniRule"/>
</dbReference>
<dbReference type="GO" id="GO:0003899">
    <property type="term" value="F:DNA-directed RNA polymerase activity"/>
    <property type="evidence" value="ECO:0007669"/>
    <property type="project" value="UniProtKB-UniRule"/>
</dbReference>
<dbReference type="GO" id="GO:0032549">
    <property type="term" value="F:ribonucleoside binding"/>
    <property type="evidence" value="ECO:0007669"/>
    <property type="project" value="InterPro"/>
</dbReference>
<dbReference type="GO" id="GO:0006351">
    <property type="term" value="P:DNA-templated transcription"/>
    <property type="evidence" value="ECO:0007669"/>
    <property type="project" value="UniProtKB-UniRule"/>
</dbReference>
<dbReference type="CDD" id="cd00653">
    <property type="entry name" value="RNA_pol_B_RPB2"/>
    <property type="match status" value="1"/>
</dbReference>
<dbReference type="FunFam" id="2.40.50.150:FF:000006">
    <property type="entry name" value="DNA-directed RNA polymerase subunit beta"/>
    <property type="match status" value="1"/>
</dbReference>
<dbReference type="FunFam" id="3.90.1110.10:FF:000009">
    <property type="entry name" value="DNA-directed RNA polymerase subunit beta"/>
    <property type="match status" value="1"/>
</dbReference>
<dbReference type="Gene3D" id="2.40.50.100">
    <property type="match status" value="1"/>
</dbReference>
<dbReference type="Gene3D" id="2.40.50.150">
    <property type="match status" value="1"/>
</dbReference>
<dbReference type="Gene3D" id="3.90.1100.10">
    <property type="match status" value="1"/>
</dbReference>
<dbReference type="Gene3D" id="2.30.150.10">
    <property type="entry name" value="DNA-directed RNA polymerase, beta subunit, external 1 domain"/>
    <property type="match status" value="1"/>
</dbReference>
<dbReference type="Gene3D" id="2.40.270.10">
    <property type="entry name" value="DNA-directed RNA polymerase, subunit 2, domain 6"/>
    <property type="match status" value="1"/>
</dbReference>
<dbReference type="Gene3D" id="3.90.1800.10">
    <property type="entry name" value="RNA polymerase alpha subunit dimerisation domain"/>
    <property type="match status" value="1"/>
</dbReference>
<dbReference type="Gene3D" id="3.90.1110.10">
    <property type="entry name" value="RNA polymerase Rpb2, domain 2"/>
    <property type="match status" value="1"/>
</dbReference>
<dbReference type="HAMAP" id="MF_01321">
    <property type="entry name" value="RNApol_bact_RpoB"/>
    <property type="match status" value="1"/>
</dbReference>
<dbReference type="InterPro" id="IPR042107">
    <property type="entry name" value="DNA-dir_RNA_pol_bsu_ext_1_sf"/>
</dbReference>
<dbReference type="InterPro" id="IPR015712">
    <property type="entry name" value="DNA-dir_RNA_pol_su2"/>
</dbReference>
<dbReference type="InterPro" id="IPR007120">
    <property type="entry name" value="DNA-dir_RNAP_su2_dom"/>
</dbReference>
<dbReference type="InterPro" id="IPR037033">
    <property type="entry name" value="DNA-dir_RNAP_su2_hyb_sf"/>
</dbReference>
<dbReference type="InterPro" id="IPR010243">
    <property type="entry name" value="RNA_pol_bsu_bac"/>
</dbReference>
<dbReference type="InterPro" id="IPR007121">
    <property type="entry name" value="RNA_pol_bsu_CS"/>
</dbReference>
<dbReference type="InterPro" id="IPR007642">
    <property type="entry name" value="RNA_pol_Rpb2_2"/>
</dbReference>
<dbReference type="InterPro" id="IPR037034">
    <property type="entry name" value="RNA_pol_Rpb2_2_sf"/>
</dbReference>
<dbReference type="InterPro" id="IPR007645">
    <property type="entry name" value="RNA_pol_Rpb2_3"/>
</dbReference>
<dbReference type="InterPro" id="IPR007641">
    <property type="entry name" value="RNA_pol_Rpb2_7"/>
</dbReference>
<dbReference type="InterPro" id="IPR014724">
    <property type="entry name" value="RNA_pol_RPB2_OB-fold"/>
</dbReference>
<dbReference type="NCBIfam" id="NF001616">
    <property type="entry name" value="PRK00405.1"/>
    <property type="match status" value="1"/>
</dbReference>
<dbReference type="PANTHER" id="PTHR20856">
    <property type="entry name" value="DNA-DIRECTED RNA POLYMERASE I SUBUNIT 2"/>
    <property type="match status" value="1"/>
</dbReference>
<dbReference type="Pfam" id="PF04561">
    <property type="entry name" value="RNA_pol_Rpb2_2"/>
    <property type="match status" value="1"/>
</dbReference>
<dbReference type="Pfam" id="PF04565">
    <property type="entry name" value="RNA_pol_Rpb2_3"/>
    <property type="match status" value="1"/>
</dbReference>
<dbReference type="Pfam" id="PF00562">
    <property type="entry name" value="RNA_pol_Rpb2_6"/>
    <property type="match status" value="1"/>
</dbReference>
<dbReference type="Pfam" id="PF04560">
    <property type="entry name" value="RNA_pol_Rpb2_7"/>
    <property type="match status" value="1"/>
</dbReference>
<dbReference type="SUPFAM" id="SSF64484">
    <property type="entry name" value="beta and beta-prime subunits of DNA dependent RNA-polymerase"/>
    <property type="match status" value="1"/>
</dbReference>
<dbReference type="PROSITE" id="PS01166">
    <property type="entry name" value="RNA_POL_BETA"/>
    <property type="match status" value="1"/>
</dbReference>
<sequence length="1072" mass="120991">MLGDGKEGTSTIPGFNQIQFEGFYRFIDQGLIEELSKFPKIEDIDHEIEFQLFVETYQLVEPLIKERNAVYESLTYSSELYVSAGLIWKTSRNMQEQRIFIGNIPLMNSLGTSIVNGIYRIVINQILQSPGIYYQSELDHNGISVYTGTIISDWGGRLELEIDKKARIWARVSRKQKISILVLSSAMGSNLREILENVSYPEIFLSFLTDKEKKKIGSKENAILEFYQQFSCVGGDPIFSESLCKELQKKFFHQRCELGRIGRRNINWRLNLNIPQNNIFLLPRDILAAADHLIGMKFGMGTLDDMNHLKNKRIRSVADLLQDQLGLALARLENVVKGTISGAIRHKLIPTPQNLVTSTPLTTTYESFFGLHPLSQVLDRTNPLTQIVHGRKLSYLGPGGLTGRTANFRIRDIHPSHYGRICPIDTSEGINVGLIGSLSIHARIGDWGSLESPFYELFEKSKKARIRMLFLSPSQDEYYMIAAGNSLALNRGIQEEQAVPARYRQEFLTIAWEEVHLRSIFPFQYFSIGASLIPFIEHNDANRALMSSNMQRQAVPLSRSEKCIVGTGLERQVALDSGVPAIAEHEGKILYTDTEKIVLSGSGDTLTIPLIMYQRSNKNTCMHQKPQVRRGKCIKKGQILADGAATVGGELALGKNILVAYMPWEGYNFEDAVLISECLVYGDIYTSFHIRKYEIQTHVTTQGPERITKEIPHLEGRLLRNLDKNGIVMLGSWVETGDILVGKLTPQVAKESSYAPEDRLLRAILGIQVSTSKETCLKLPIGGRGRVIDVRWVQKKGGSSYNPEIIRVYISQKREIKVGDKVAGRHGNKGIISKILPRQDMPYLQDGRPVDMVFNPLGVPSRMNVGQIFECSLGLAGSLLDRHYRIAPFDERYEQEASRKLVFSELYEASKQTANPWVFEPEYPGKSRIFDGRTGDPFEQPVIIGKPYILKLIHQVDDKIHGRSSGHYALVTQQPLRGRSKQGGQRVGEMEVWALEGFGVAHILQEMLTYKSDHIRARQEVLGTTIIGGTIPKPEDAPESFRLLVRELRSLALELNHFFVSEKNFQINRKEV</sequence>
<geneLocation type="chloroplast"/>
<protein>
    <recommendedName>
        <fullName evidence="1">DNA-directed RNA polymerase subunit beta</fullName>
        <ecNumber evidence="1">2.7.7.6</ecNumber>
    </recommendedName>
    <alternativeName>
        <fullName evidence="1">PEP</fullName>
    </alternativeName>
    <alternativeName>
        <fullName evidence="1">Plastid-encoded RNA polymerase subunit beta</fullName>
        <shortName evidence="1">RNA polymerase subunit beta</shortName>
    </alternativeName>
</protein>
<accession>A4QJS5</accession>
<reference key="1">
    <citation type="submission" date="2007-03" db="EMBL/GenBank/DDBJ databases">
        <title>Sequence analysis of Arabidopsis pumila JS2 chloroplast DNA.</title>
        <authorList>
            <person name="Hosouchi T."/>
            <person name="Tsuruoka H."/>
            <person name="Kotani H."/>
        </authorList>
    </citation>
    <scope>NUCLEOTIDE SEQUENCE [LARGE SCALE GENOMIC DNA]</scope>
</reference>
<keyword id="KW-0150">Chloroplast</keyword>
<keyword id="KW-0240">DNA-directed RNA polymerase</keyword>
<keyword id="KW-0548">Nucleotidyltransferase</keyword>
<keyword id="KW-0934">Plastid</keyword>
<keyword id="KW-0804">Transcription</keyword>
<keyword id="KW-0808">Transferase</keyword>
<organism>
    <name type="scientific">Olimarabidopsis pumila</name>
    <name type="common">Dwarf rocket</name>
    <name type="synonym">Arabidopsis griffithiana</name>
    <dbReference type="NCBI Taxonomy" id="74718"/>
    <lineage>
        <taxon>Eukaryota</taxon>
        <taxon>Viridiplantae</taxon>
        <taxon>Streptophyta</taxon>
        <taxon>Embryophyta</taxon>
        <taxon>Tracheophyta</taxon>
        <taxon>Spermatophyta</taxon>
        <taxon>Magnoliopsida</taxon>
        <taxon>eudicotyledons</taxon>
        <taxon>Gunneridae</taxon>
        <taxon>Pentapetalae</taxon>
        <taxon>rosids</taxon>
        <taxon>malvids</taxon>
        <taxon>Brassicales</taxon>
        <taxon>Brassicaceae</taxon>
        <taxon>Alyssopsideae</taxon>
        <taxon>Olimarabidopsis</taxon>
    </lineage>
</organism>
<gene>
    <name evidence="1" type="primary">rpoB</name>
</gene>
<proteinExistence type="inferred from homology"/>
<name>RPOB_OLIPU</name>
<evidence type="ECO:0000255" key="1">
    <source>
        <dbReference type="HAMAP-Rule" id="MF_01321"/>
    </source>
</evidence>
<comment type="function">
    <text evidence="1">DNA-dependent RNA polymerase catalyzes the transcription of DNA into RNA using the four ribonucleoside triphosphates as substrates.</text>
</comment>
<comment type="catalytic activity">
    <reaction evidence="1">
        <text>RNA(n) + a ribonucleoside 5'-triphosphate = RNA(n+1) + diphosphate</text>
        <dbReference type="Rhea" id="RHEA:21248"/>
        <dbReference type="Rhea" id="RHEA-COMP:14527"/>
        <dbReference type="Rhea" id="RHEA-COMP:17342"/>
        <dbReference type="ChEBI" id="CHEBI:33019"/>
        <dbReference type="ChEBI" id="CHEBI:61557"/>
        <dbReference type="ChEBI" id="CHEBI:140395"/>
        <dbReference type="EC" id="2.7.7.6"/>
    </reaction>
</comment>
<comment type="subunit">
    <text evidence="1">In plastids the minimal PEP RNA polymerase catalytic core is composed of four subunits: alpha, beta, beta', and beta''. When a (nuclear-encoded) sigma factor is associated with the core the holoenzyme is formed, which can initiate transcription.</text>
</comment>
<comment type="subcellular location">
    <subcellularLocation>
        <location>Plastid</location>
        <location>Chloroplast</location>
    </subcellularLocation>
</comment>
<comment type="similarity">
    <text evidence="1">Belongs to the RNA polymerase beta chain family.</text>
</comment>
<feature type="chain" id="PRO_0000300450" description="DNA-directed RNA polymerase subunit beta">
    <location>
        <begin position="1"/>
        <end position="1072"/>
    </location>
</feature>